<evidence type="ECO:0000255" key="1">
    <source>
        <dbReference type="HAMAP-Rule" id="MF_00144"/>
    </source>
</evidence>
<organism>
    <name type="scientific">Xanthomonas campestris pv. campestris (strain B100)</name>
    <dbReference type="NCBI Taxonomy" id="509169"/>
    <lineage>
        <taxon>Bacteria</taxon>
        <taxon>Pseudomonadati</taxon>
        <taxon>Pseudomonadota</taxon>
        <taxon>Gammaproteobacteria</taxon>
        <taxon>Lysobacterales</taxon>
        <taxon>Lysobacteraceae</taxon>
        <taxon>Xanthomonas</taxon>
    </lineage>
</organism>
<accession>B0RT32</accession>
<sequence>MSTPRTIVGVSGGVDSSVAAWKLAQDGEPIAGLFMQNWADDGSGDCRAEDDRRDAVAVCGVLGIPFHFRDFSGEYWSGVFEHFLAEYAAGRTPNPDVLCNREVKFKHFLEAAQALGAERIATGHYARVAHLGGRWRLLRGADRNKDQSYFLHQLGQSQLAATLFPIGELEKSALRRIAQDAGLPTHAKKDSTGICFIGERDFREFLGRYLPARTGEIRDPQGQRIAEHPGVFYFTLGQREGLNIGGVRGRAAAPWYVVGKDVGSNVLYVDQDRDSPLLQSRWLQSEQAHWVTGAPPARSFSCTAQTRYRQPDEPCTVTVQDDGTLQVNFERPQRAVTPGQSLVLYDGEECLGGAVIAATDAPLERQLAGSSFSSEVVA</sequence>
<feature type="chain" id="PRO_0000349858" description="tRNA-specific 2-thiouridylase MnmA">
    <location>
        <begin position="1"/>
        <end position="378"/>
    </location>
</feature>
<feature type="region of interest" description="Interaction with target base in tRNA" evidence="1">
    <location>
        <begin position="94"/>
        <end position="96"/>
    </location>
</feature>
<feature type="region of interest" description="Interaction with tRNA" evidence="1">
    <location>
        <begin position="145"/>
        <end position="147"/>
    </location>
</feature>
<feature type="region of interest" description="Interaction with tRNA" evidence="1">
    <location>
        <begin position="307"/>
        <end position="308"/>
    </location>
</feature>
<feature type="active site" description="Nucleophile" evidence="1">
    <location>
        <position position="99"/>
    </location>
</feature>
<feature type="active site" description="Cysteine persulfide intermediate" evidence="1">
    <location>
        <position position="195"/>
    </location>
</feature>
<feature type="binding site" evidence="1">
    <location>
        <begin position="9"/>
        <end position="16"/>
    </location>
    <ligand>
        <name>ATP</name>
        <dbReference type="ChEBI" id="CHEBI:30616"/>
    </ligand>
</feature>
<feature type="binding site" evidence="1">
    <location>
        <position position="35"/>
    </location>
    <ligand>
        <name>ATP</name>
        <dbReference type="ChEBI" id="CHEBI:30616"/>
    </ligand>
</feature>
<feature type="binding site" evidence="1">
    <location>
        <position position="123"/>
    </location>
    <ligand>
        <name>ATP</name>
        <dbReference type="ChEBI" id="CHEBI:30616"/>
    </ligand>
</feature>
<feature type="site" description="Interaction with tRNA" evidence="1">
    <location>
        <position position="124"/>
    </location>
</feature>
<feature type="site" description="Interaction with tRNA" evidence="1">
    <location>
        <position position="340"/>
    </location>
</feature>
<feature type="disulfide bond" description="Alternate" evidence="1">
    <location>
        <begin position="99"/>
        <end position="195"/>
    </location>
</feature>
<gene>
    <name evidence="1" type="primary">mnmA</name>
    <name type="ordered locus">xcc-b100_2263</name>
</gene>
<comment type="function">
    <text evidence="1">Catalyzes the 2-thiolation of uridine at the wobble position (U34) of tRNA, leading to the formation of s(2)U34.</text>
</comment>
<comment type="catalytic activity">
    <reaction evidence="1">
        <text>S-sulfanyl-L-cysteinyl-[protein] + uridine(34) in tRNA + AH2 + ATP = 2-thiouridine(34) in tRNA + L-cysteinyl-[protein] + A + AMP + diphosphate + H(+)</text>
        <dbReference type="Rhea" id="RHEA:47032"/>
        <dbReference type="Rhea" id="RHEA-COMP:10131"/>
        <dbReference type="Rhea" id="RHEA-COMP:11726"/>
        <dbReference type="Rhea" id="RHEA-COMP:11727"/>
        <dbReference type="Rhea" id="RHEA-COMP:11728"/>
        <dbReference type="ChEBI" id="CHEBI:13193"/>
        <dbReference type="ChEBI" id="CHEBI:15378"/>
        <dbReference type="ChEBI" id="CHEBI:17499"/>
        <dbReference type="ChEBI" id="CHEBI:29950"/>
        <dbReference type="ChEBI" id="CHEBI:30616"/>
        <dbReference type="ChEBI" id="CHEBI:33019"/>
        <dbReference type="ChEBI" id="CHEBI:61963"/>
        <dbReference type="ChEBI" id="CHEBI:65315"/>
        <dbReference type="ChEBI" id="CHEBI:87170"/>
        <dbReference type="ChEBI" id="CHEBI:456215"/>
        <dbReference type="EC" id="2.8.1.13"/>
    </reaction>
</comment>
<comment type="subcellular location">
    <subcellularLocation>
        <location evidence="1">Cytoplasm</location>
    </subcellularLocation>
</comment>
<comment type="similarity">
    <text evidence="1">Belongs to the MnmA/TRMU family.</text>
</comment>
<protein>
    <recommendedName>
        <fullName evidence="1">tRNA-specific 2-thiouridylase MnmA</fullName>
        <ecNumber evidence="1">2.8.1.13</ecNumber>
    </recommendedName>
</protein>
<proteinExistence type="inferred from homology"/>
<dbReference type="EC" id="2.8.1.13" evidence="1"/>
<dbReference type="EMBL" id="AM920689">
    <property type="protein sequence ID" value="CAP51618.1"/>
    <property type="molecule type" value="Genomic_DNA"/>
</dbReference>
<dbReference type="SMR" id="B0RT32"/>
<dbReference type="KEGG" id="xca:xcc-b100_2263"/>
<dbReference type="HOGENOM" id="CLU_035188_1_0_6"/>
<dbReference type="Proteomes" id="UP000001188">
    <property type="component" value="Chromosome"/>
</dbReference>
<dbReference type="GO" id="GO:0005737">
    <property type="term" value="C:cytoplasm"/>
    <property type="evidence" value="ECO:0007669"/>
    <property type="project" value="UniProtKB-SubCell"/>
</dbReference>
<dbReference type="GO" id="GO:0005524">
    <property type="term" value="F:ATP binding"/>
    <property type="evidence" value="ECO:0007669"/>
    <property type="project" value="UniProtKB-KW"/>
</dbReference>
<dbReference type="GO" id="GO:0000049">
    <property type="term" value="F:tRNA binding"/>
    <property type="evidence" value="ECO:0007669"/>
    <property type="project" value="UniProtKB-KW"/>
</dbReference>
<dbReference type="GO" id="GO:0103016">
    <property type="term" value="F:tRNA-uridine 2-sulfurtransferase activity"/>
    <property type="evidence" value="ECO:0007669"/>
    <property type="project" value="UniProtKB-EC"/>
</dbReference>
<dbReference type="GO" id="GO:0002143">
    <property type="term" value="P:tRNA wobble position uridine thiolation"/>
    <property type="evidence" value="ECO:0007669"/>
    <property type="project" value="TreeGrafter"/>
</dbReference>
<dbReference type="CDD" id="cd01998">
    <property type="entry name" value="MnmA_TRMU-like"/>
    <property type="match status" value="1"/>
</dbReference>
<dbReference type="FunFam" id="2.30.30.280:FF:000001">
    <property type="entry name" value="tRNA-specific 2-thiouridylase MnmA"/>
    <property type="match status" value="1"/>
</dbReference>
<dbReference type="FunFam" id="2.40.30.10:FF:000023">
    <property type="entry name" value="tRNA-specific 2-thiouridylase MnmA"/>
    <property type="match status" value="1"/>
</dbReference>
<dbReference type="FunFam" id="3.40.50.620:FF:000004">
    <property type="entry name" value="tRNA-specific 2-thiouridylase MnmA"/>
    <property type="match status" value="1"/>
</dbReference>
<dbReference type="Gene3D" id="2.30.30.280">
    <property type="entry name" value="Adenine nucleotide alpha hydrolases-like domains"/>
    <property type="match status" value="1"/>
</dbReference>
<dbReference type="Gene3D" id="3.40.50.620">
    <property type="entry name" value="HUPs"/>
    <property type="match status" value="1"/>
</dbReference>
<dbReference type="Gene3D" id="2.40.30.10">
    <property type="entry name" value="Translation factors"/>
    <property type="match status" value="1"/>
</dbReference>
<dbReference type="HAMAP" id="MF_00144">
    <property type="entry name" value="tRNA_thiouridyl_MnmA"/>
    <property type="match status" value="1"/>
</dbReference>
<dbReference type="InterPro" id="IPR004506">
    <property type="entry name" value="MnmA-like"/>
</dbReference>
<dbReference type="InterPro" id="IPR046885">
    <property type="entry name" value="MnmA-like_C"/>
</dbReference>
<dbReference type="InterPro" id="IPR046884">
    <property type="entry name" value="MnmA-like_central"/>
</dbReference>
<dbReference type="InterPro" id="IPR023382">
    <property type="entry name" value="MnmA-like_central_sf"/>
</dbReference>
<dbReference type="InterPro" id="IPR014729">
    <property type="entry name" value="Rossmann-like_a/b/a_fold"/>
</dbReference>
<dbReference type="NCBIfam" id="NF001138">
    <property type="entry name" value="PRK00143.1"/>
    <property type="match status" value="1"/>
</dbReference>
<dbReference type="NCBIfam" id="TIGR00420">
    <property type="entry name" value="trmU"/>
    <property type="match status" value="1"/>
</dbReference>
<dbReference type="PANTHER" id="PTHR11933:SF5">
    <property type="entry name" value="MITOCHONDRIAL TRNA-SPECIFIC 2-THIOURIDYLASE 1"/>
    <property type="match status" value="1"/>
</dbReference>
<dbReference type="PANTHER" id="PTHR11933">
    <property type="entry name" value="TRNA 5-METHYLAMINOMETHYL-2-THIOURIDYLATE -METHYLTRANSFERASE"/>
    <property type="match status" value="1"/>
</dbReference>
<dbReference type="Pfam" id="PF03054">
    <property type="entry name" value="tRNA_Me_trans"/>
    <property type="match status" value="1"/>
</dbReference>
<dbReference type="Pfam" id="PF20258">
    <property type="entry name" value="tRNA_Me_trans_C"/>
    <property type="match status" value="1"/>
</dbReference>
<dbReference type="Pfam" id="PF20259">
    <property type="entry name" value="tRNA_Me_trans_M"/>
    <property type="match status" value="1"/>
</dbReference>
<dbReference type="SUPFAM" id="SSF52402">
    <property type="entry name" value="Adenine nucleotide alpha hydrolases-like"/>
    <property type="match status" value="1"/>
</dbReference>
<name>MNMA_XANCB</name>
<reference key="1">
    <citation type="journal article" date="2008" name="J. Biotechnol.">
        <title>The genome of Xanthomonas campestris pv. campestris B100 and its use for the reconstruction of metabolic pathways involved in xanthan biosynthesis.</title>
        <authorList>
            <person name="Vorhoelter F.-J."/>
            <person name="Schneiker S."/>
            <person name="Goesmann A."/>
            <person name="Krause L."/>
            <person name="Bekel T."/>
            <person name="Kaiser O."/>
            <person name="Linke B."/>
            <person name="Patschkowski T."/>
            <person name="Rueckert C."/>
            <person name="Schmid J."/>
            <person name="Sidhu V.K."/>
            <person name="Sieber V."/>
            <person name="Tauch A."/>
            <person name="Watt S.A."/>
            <person name="Weisshaar B."/>
            <person name="Becker A."/>
            <person name="Niehaus K."/>
            <person name="Puehler A."/>
        </authorList>
    </citation>
    <scope>NUCLEOTIDE SEQUENCE [LARGE SCALE GENOMIC DNA]</scope>
    <source>
        <strain>B100</strain>
    </source>
</reference>
<keyword id="KW-0067">ATP-binding</keyword>
<keyword id="KW-0963">Cytoplasm</keyword>
<keyword id="KW-1015">Disulfide bond</keyword>
<keyword id="KW-0547">Nucleotide-binding</keyword>
<keyword id="KW-0694">RNA-binding</keyword>
<keyword id="KW-0808">Transferase</keyword>
<keyword id="KW-0819">tRNA processing</keyword>
<keyword id="KW-0820">tRNA-binding</keyword>